<feature type="chain" id="PRO_1000147409" description="UDP-N-acetylmuramoylalanine--D-glutamate ligase">
    <location>
        <begin position="1"/>
        <end position="445"/>
    </location>
</feature>
<feature type="binding site" evidence="1">
    <location>
        <begin position="118"/>
        <end position="124"/>
    </location>
    <ligand>
        <name>ATP</name>
        <dbReference type="ChEBI" id="CHEBI:30616"/>
    </ligand>
</feature>
<organism>
    <name type="scientific">Macrococcus caseolyticus (strain JCSC5402)</name>
    <name type="common">Macrococcoides caseolyticum</name>
    <dbReference type="NCBI Taxonomy" id="458233"/>
    <lineage>
        <taxon>Bacteria</taxon>
        <taxon>Bacillati</taxon>
        <taxon>Bacillota</taxon>
        <taxon>Bacilli</taxon>
        <taxon>Bacillales</taxon>
        <taxon>Staphylococcaceae</taxon>
        <taxon>Macrococcoides</taxon>
    </lineage>
</organism>
<dbReference type="EC" id="6.3.2.9" evidence="1"/>
<dbReference type="EMBL" id="AP009484">
    <property type="protein sequence ID" value="BAH17462.1"/>
    <property type="molecule type" value="Genomic_DNA"/>
</dbReference>
<dbReference type="RefSeq" id="WP_012656663.1">
    <property type="nucleotide sequence ID" value="NC_011999.1"/>
</dbReference>
<dbReference type="SMR" id="B9EB51"/>
<dbReference type="STRING" id="458233.MCCL_0755"/>
<dbReference type="KEGG" id="mcl:MCCL_0755"/>
<dbReference type="eggNOG" id="COG0771">
    <property type="taxonomic scope" value="Bacteria"/>
</dbReference>
<dbReference type="HOGENOM" id="CLU_032540_0_1_9"/>
<dbReference type="OrthoDB" id="9809796at2"/>
<dbReference type="UniPathway" id="UPA00219"/>
<dbReference type="Proteomes" id="UP000001383">
    <property type="component" value="Chromosome"/>
</dbReference>
<dbReference type="GO" id="GO:0005737">
    <property type="term" value="C:cytoplasm"/>
    <property type="evidence" value="ECO:0007669"/>
    <property type="project" value="UniProtKB-SubCell"/>
</dbReference>
<dbReference type="GO" id="GO:0005524">
    <property type="term" value="F:ATP binding"/>
    <property type="evidence" value="ECO:0007669"/>
    <property type="project" value="UniProtKB-UniRule"/>
</dbReference>
<dbReference type="GO" id="GO:0008764">
    <property type="term" value="F:UDP-N-acetylmuramoylalanine-D-glutamate ligase activity"/>
    <property type="evidence" value="ECO:0007669"/>
    <property type="project" value="UniProtKB-UniRule"/>
</dbReference>
<dbReference type="GO" id="GO:0051301">
    <property type="term" value="P:cell division"/>
    <property type="evidence" value="ECO:0007669"/>
    <property type="project" value="UniProtKB-KW"/>
</dbReference>
<dbReference type="GO" id="GO:0071555">
    <property type="term" value="P:cell wall organization"/>
    <property type="evidence" value="ECO:0007669"/>
    <property type="project" value="UniProtKB-KW"/>
</dbReference>
<dbReference type="GO" id="GO:0009252">
    <property type="term" value="P:peptidoglycan biosynthetic process"/>
    <property type="evidence" value="ECO:0007669"/>
    <property type="project" value="UniProtKB-UniRule"/>
</dbReference>
<dbReference type="GO" id="GO:0008360">
    <property type="term" value="P:regulation of cell shape"/>
    <property type="evidence" value="ECO:0007669"/>
    <property type="project" value="UniProtKB-KW"/>
</dbReference>
<dbReference type="Gene3D" id="3.90.190.20">
    <property type="entry name" value="Mur ligase, C-terminal domain"/>
    <property type="match status" value="1"/>
</dbReference>
<dbReference type="Gene3D" id="3.40.1190.10">
    <property type="entry name" value="Mur-like, catalytic domain"/>
    <property type="match status" value="1"/>
</dbReference>
<dbReference type="Gene3D" id="3.40.50.720">
    <property type="entry name" value="NAD(P)-binding Rossmann-like Domain"/>
    <property type="match status" value="1"/>
</dbReference>
<dbReference type="HAMAP" id="MF_00639">
    <property type="entry name" value="MurD"/>
    <property type="match status" value="1"/>
</dbReference>
<dbReference type="InterPro" id="IPR036565">
    <property type="entry name" value="Mur-like_cat_sf"/>
</dbReference>
<dbReference type="InterPro" id="IPR004101">
    <property type="entry name" value="Mur_ligase_C"/>
</dbReference>
<dbReference type="InterPro" id="IPR036615">
    <property type="entry name" value="Mur_ligase_C_dom_sf"/>
</dbReference>
<dbReference type="InterPro" id="IPR013221">
    <property type="entry name" value="Mur_ligase_cen"/>
</dbReference>
<dbReference type="InterPro" id="IPR005762">
    <property type="entry name" value="MurD"/>
</dbReference>
<dbReference type="NCBIfam" id="TIGR01087">
    <property type="entry name" value="murD"/>
    <property type="match status" value="1"/>
</dbReference>
<dbReference type="PANTHER" id="PTHR43692">
    <property type="entry name" value="UDP-N-ACETYLMURAMOYLALANINE--D-GLUTAMATE LIGASE"/>
    <property type="match status" value="1"/>
</dbReference>
<dbReference type="PANTHER" id="PTHR43692:SF1">
    <property type="entry name" value="UDP-N-ACETYLMURAMOYLALANINE--D-GLUTAMATE LIGASE"/>
    <property type="match status" value="1"/>
</dbReference>
<dbReference type="Pfam" id="PF02875">
    <property type="entry name" value="Mur_ligase_C"/>
    <property type="match status" value="1"/>
</dbReference>
<dbReference type="Pfam" id="PF08245">
    <property type="entry name" value="Mur_ligase_M"/>
    <property type="match status" value="1"/>
</dbReference>
<dbReference type="Pfam" id="PF21799">
    <property type="entry name" value="MurD-like_N"/>
    <property type="match status" value="1"/>
</dbReference>
<dbReference type="SUPFAM" id="SSF51984">
    <property type="entry name" value="MurCD N-terminal domain"/>
    <property type="match status" value="1"/>
</dbReference>
<dbReference type="SUPFAM" id="SSF53623">
    <property type="entry name" value="MurD-like peptide ligases, catalytic domain"/>
    <property type="match status" value="1"/>
</dbReference>
<dbReference type="SUPFAM" id="SSF53244">
    <property type="entry name" value="MurD-like peptide ligases, peptide-binding domain"/>
    <property type="match status" value="1"/>
</dbReference>
<keyword id="KW-0067">ATP-binding</keyword>
<keyword id="KW-0131">Cell cycle</keyword>
<keyword id="KW-0132">Cell division</keyword>
<keyword id="KW-0133">Cell shape</keyword>
<keyword id="KW-0961">Cell wall biogenesis/degradation</keyword>
<keyword id="KW-0963">Cytoplasm</keyword>
<keyword id="KW-0436">Ligase</keyword>
<keyword id="KW-0547">Nucleotide-binding</keyword>
<keyword id="KW-0573">Peptidoglycan synthesis</keyword>
<keyword id="KW-1185">Reference proteome</keyword>
<accession>B9EB51</accession>
<protein>
    <recommendedName>
        <fullName evidence="1">UDP-N-acetylmuramoylalanine--D-glutamate ligase</fullName>
        <ecNumber evidence="1">6.3.2.9</ecNumber>
    </recommendedName>
    <alternativeName>
        <fullName evidence="1">D-glutamic acid-adding enzyme</fullName>
    </alternativeName>
    <alternativeName>
        <fullName evidence="1">UDP-N-acetylmuramoyl-L-alanyl-D-glutamate synthetase</fullName>
    </alternativeName>
</protein>
<proteinExistence type="inferred from homology"/>
<gene>
    <name evidence="1" type="primary">murD</name>
    <name type="ordered locus">MCCL_0755</name>
</gene>
<comment type="function">
    <text evidence="1">Cell wall formation. Catalyzes the addition of glutamate to the nucleotide precursor UDP-N-acetylmuramoyl-L-alanine (UMA).</text>
</comment>
<comment type="catalytic activity">
    <reaction evidence="1">
        <text>UDP-N-acetyl-alpha-D-muramoyl-L-alanine + D-glutamate + ATP = UDP-N-acetyl-alpha-D-muramoyl-L-alanyl-D-glutamate + ADP + phosphate + H(+)</text>
        <dbReference type="Rhea" id="RHEA:16429"/>
        <dbReference type="ChEBI" id="CHEBI:15378"/>
        <dbReference type="ChEBI" id="CHEBI:29986"/>
        <dbReference type="ChEBI" id="CHEBI:30616"/>
        <dbReference type="ChEBI" id="CHEBI:43474"/>
        <dbReference type="ChEBI" id="CHEBI:83898"/>
        <dbReference type="ChEBI" id="CHEBI:83900"/>
        <dbReference type="ChEBI" id="CHEBI:456216"/>
        <dbReference type="EC" id="6.3.2.9"/>
    </reaction>
</comment>
<comment type="pathway">
    <text evidence="1">Cell wall biogenesis; peptidoglycan biosynthesis.</text>
</comment>
<comment type="subcellular location">
    <subcellularLocation>
        <location evidence="1">Cytoplasm</location>
    </subcellularLocation>
</comment>
<comment type="similarity">
    <text evidence="1">Belongs to the MurCDEF family.</text>
</comment>
<reference key="1">
    <citation type="journal article" date="2009" name="J. Bacteriol.">
        <title>Complete genome sequence of Macrococcus caseolyticus strain JCSCS5402, reflecting the ancestral genome of the human-pathogenic staphylococci.</title>
        <authorList>
            <person name="Baba T."/>
            <person name="Kuwahara-Arai K."/>
            <person name="Uchiyama I."/>
            <person name="Takeuchi F."/>
            <person name="Ito T."/>
            <person name="Hiramatsu K."/>
        </authorList>
    </citation>
    <scope>NUCLEOTIDE SEQUENCE [LARGE SCALE GENOMIC DNA]</scope>
    <source>
        <strain>JCSC5402</strain>
    </source>
</reference>
<sequence>MKHIQKYQGKKVLVLGLGKSGYETAKLLYRLGAQVTVNDGKDVSQTEQYRELTEMGITVIGGHHPLSLLEHTTLIVKNPGIPYTLSLIEQAQTMNIPIITEVELAYEITESSILGITGTNGKTTVTSLIGDMFKAHEHAGLLCGNIGFVASKVAQNAGAHDTLVMELSSFQLMGIQEFRPHIALITNIYSAHLDYHGNQQNYIDAKMQITKNQTSEDYLIFNDKQRTLLQNYNIKSKVVYFSTDEKVEGAYIDQNKVYFYDEFIIDVKDIVLPGVHNLENVLASIAAAKLAGIDNIHICDTLKTFEGIKHRLQFVTETDGVKYYNDSKATNTLATSFALDSFHQPTHWLAGGLDRGNGFEELDTHIDHVKHMYIFGETTEKLTAFAAQHHIPYTICKDVTDAVLKTASYVERGEVVLLSPACASWDQYPTYEVRGEHFISQVKLI</sequence>
<evidence type="ECO:0000255" key="1">
    <source>
        <dbReference type="HAMAP-Rule" id="MF_00639"/>
    </source>
</evidence>
<name>MURD_MACCJ</name>